<proteinExistence type="inferred from homology"/>
<comment type="function">
    <text evidence="1">Catalyzes the reduction of the glycolytic intermediate dihydroxyacetone phosphate (DHAP) to sn-glycerol 3-phosphate (G3P), the key precursor for phospholipid synthesis.</text>
</comment>
<comment type="catalytic activity">
    <reaction evidence="1">
        <text>sn-glycerol 3-phosphate + NAD(+) = dihydroxyacetone phosphate + NADH + H(+)</text>
        <dbReference type="Rhea" id="RHEA:11092"/>
        <dbReference type="ChEBI" id="CHEBI:15378"/>
        <dbReference type="ChEBI" id="CHEBI:57540"/>
        <dbReference type="ChEBI" id="CHEBI:57597"/>
        <dbReference type="ChEBI" id="CHEBI:57642"/>
        <dbReference type="ChEBI" id="CHEBI:57945"/>
        <dbReference type="EC" id="1.1.1.94"/>
    </reaction>
    <physiologicalReaction direction="right-to-left" evidence="1">
        <dbReference type="Rhea" id="RHEA:11094"/>
    </physiologicalReaction>
</comment>
<comment type="catalytic activity">
    <reaction evidence="1">
        <text>sn-glycerol 3-phosphate + NADP(+) = dihydroxyacetone phosphate + NADPH + H(+)</text>
        <dbReference type="Rhea" id="RHEA:11096"/>
        <dbReference type="ChEBI" id="CHEBI:15378"/>
        <dbReference type="ChEBI" id="CHEBI:57597"/>
        <dbReference type="ChEBI" id="CHEBI:57642"/>
        <dbReference type="ChEBI" id="CHEBI:57783"/>
        <dbReference type="ChEBI" id="CHEBI:58349"/>
        <dbReference type="EC" id="1.1.1.94"/>
    </reaction>
    <physiologicalReaction direction="right-to-left" evidence="1">
        <dbReference type="Rhea" id="RHEA:11098"/>
    </physiologicalReaction>
</comment>
<comment type="pathway">
    <text evidence="1">Membrane lipid metabolism; glycerophospholipid metabolism.</text>
</comment>
<comment type="subcellular location">
    <subcellularLocation>
        <location evidence="1">Cytoplasm</location>
    </subcellularLocation>
</comment>
<comment type="similarity">
    <text evidence="1">Belongs to the NAD-dependent glycerol-3-phosphate dehydrogenase family.</text>
</comment>
<feature type="chain" id="PRO_1000049514" description="Glycerol-3-phosphate dehydrogenase [NAD(P)+]">
    <location>
        <begin position="1"/>
        <end position="331"/>
    </location>
</feature>
<feature type="active site" description="Proton acceptor" evidence="1">
    <location>
        <position position="189"/>
    </location>
</feature>
<feature type="binding site" evidence="1">
    <location>
        <position position="11"/>
    </location>
    <ligand>
        <name>NADPH</name>
        <dbReference type="ChEBI" id="CHEBI:57783"/>
    </ligand>
</feature>
<feature type="binding site" evidence="1">
    <location>
        <position position="30"/>
    </location>
    <ligand>
        <name>NADPH</name>
        <dbReference type="ChEBI" id="CHEBI:57783"/>
    </ligand>
</feature>
<feature type="binding site" evidence="1">
    <location>
        <position position="105"/>
    </location>
    <ligand>
        <name>NADPH</name>
        <dbReference type="ChEBI" id="CHEBI:57783"/>
    </ligand>
</feature>
<feature type="binding site" evidence="1">
    <location>
        <position position="105"/>
    </location>
    <ligand>
        <name>sn-glycerol 3-phosphate</name>
        <dbReference type="ChEBI" id="CHEBI:57597"/>
    </ligand>
</feature>
<feature type="binding site" evidence="1">
    <location>
        <position position="134"/>
    </location>
    <ligand>
        <name>sn-glycerol 3-phosphate</name>
        <dbReference type="ChEBI" id="CHEBI:57597"/>
    </ligand>
</feature>
<feature type="binding site" evidence="1">
    <location>
        <position position="136"/>
    </location>
    <ligand>
        <name>sn-glycerol 3-phosphate</name>
        <dbReference type="ChEBI" id="CHEBI:57597"/>
    </ligand>
</feature>
<feature type="binding site" evidence="1">
    <location>
        <position position="138"/>
    </location>
    <ligand>
        <name>NADPH</name>
        <dbReference type="ChEBI" id="CHEBI:57783"/>
    </ligand>
</feature>
<feature type="binding site" evidence="1">
    <location>
        <position position="189"/>
    </location>
    <ligand>
        <name>sn-glycerol 3-phosphate</name>
        <dbReference type="ChEBI" id="CHEBI:57597"/>
    </ligand>
</feature>
<feature type="binding site" evidence="1">
    <location>
        <position position="242"/>
    </location>
    <ligand>
        <name>sn-glycerol 3-phosphate</name>
        <dbReference type="ChEBI" id="CHEBI:57597"/>
    </ligand>
</feature>
<feature type="binding site" evidence="1">
    <location>
        <position position="252"/>
    </location>
    <ligand>
        <name>sn-glycerol 3-phosphate</name>
        <dbReference type="ChEBI" id="CHEBI:57597"/>
    </ligand>
</feature>
<feature type="binding site" evidence="1">
    <location>
        <position position="253"/>
    </location>
    <ligand>
        <name>NADPH</name>
        <dbReference type="ChEBI" id="CHEBI:57783"/>
    </ligand>
</feature>
<feature type="binding site" evidence="1">
    <location>
        <position position="253"/>
    </location>
    <ligand>
        <name>sn-glycerol 3-phosphate</name>
        <dbReference type="ChEBI" id="CHEBI:57597"/>
    </ligand>
</feature>
<feature type="binding site" evidence="1">
    <location>
        <position position="254"/>
    </location>
    <ligand>
        <name>sn-glycerol 3-phosphate</name>
        <dbReference type="ChEBI" id="CHEBI:57597"/>
    </ligand>
</feature>
<feature type="binding site" evidence="1">
    <location>
        <position position="277"/>
    </location>
    <ligand>
        <name>NADPH</name>
        <dbReference type="ChEBI" id="CHEBI:57783"/>
    </ligand>
</feature>
<feature type="binding site" evidence="1">
    <location>
        <position position="279"/>
    </location>
    <ligand>
        <name>NADPH</name>
        <dbReference type="ChEBI" id="CHEBI:57783"/>
    </ligand>
</feature>
<keyword id="KW-0963">Cytoplasm</keyword>
<keyword id="KW-0444">Lipid biosynthesis</keyword>
<keyword id="KW-0443">Lipid metabolism</keyword>
<keyword id="KW-0520">NAD</keyword>
<keyword id="KW-0521">NADP</keyword>
<keyword id="KW-0547">Nucleotide-binding</keyword>
<keyword id="KW-0560">Oxidoreductase</keyword>
<keyword id="KW-0594">Phospholipid biosynthesis</keyword>
<keyword id="KW-1208">Phospholipid metabolism</keyword>
<protein>
    <recommendedName>
        <fullName evidence="1">Glycerol-3-phosphate dehydrogenase [NAD(P)+]</fullName>
        <ecNumber evidence="1">1.1.1.94</ecNumber>
    </recommendedName>
    <alternativeName>
        <fullName evidence="1">NAD(P)(+)-dependent glycerol-3-phosphate dehydrogenase</fullName>
    </alternativeName>
    <alternativeName>
        <fullName evidence="1">NAD(P)H-dependent dihydroxyacetone-phosphate reductase</fullName>
    </alternativeName>
</protein>
<gene>
    <name evidence="1" type="primary">gpsA</name>
    <name type="ordered locus">mma_3217</name>
</gene>
<evidence type="ECO:0000255" key="1">
    <source>
        <dbReference type="HAMAP-Rule" id="MF_00394"/>
    </source>
</evidence>
<organism>
    <name type="scientific">Janthinobacterium sp. (strain Marseille)</name>
    <name type="common">Minibacterium massiliensis</name>
    <dbReference type="NCBI Taxonomy" id="375286"/>
    <lineage>
        <taxon>Bacteria</taxon>
        <taxon>Pseudomonadati</taxon>
        <taxon>Pseudomonadota</taxon>
        <taxon>Betaproteobacteria</taxon>
        <taxon>Burkholderiales</taxon>
        <taxon>Oxalobacteraceae</taxon>
        <taxon>Janthinobacterium</taxon>
    </lineage>
</organism>
<dbReference type="EC" id="1.1.1.94" evidence="1"/>
<dbReference type="EMBL" id="CP000269">
    <property type="protein sequence ID" value="ABR88640.1"/>
    <property type="molecule type" value="Genomic_DNA"/>
</dbReference>
<dbReference type="RefSeq" id="WP_012081060.1">
    <property type="nucleotide sequence ID" value="NC_009659.1"/>
</dbReference>
<dbReference type="SMR" id="A6T310"/>
<dbReference type="STRING" id="375286.mma_3217"/>
<dbReference type="KEGG" id="mms:mma_3217"/>
<dbReference type="eggNOG" id="COG0240">
    <property type="taxonomic scope" value="Bacteria"/>
</dbReference>
<dbReference type="HOGENOM" id="CLU_033449_0_2_4"/>
<dbReference type="OrthoDB" id="9812273at2"/>
<dbReference type="UniPathway" id="UPA00940"/>
<dbReference type="Proteomes" id="UP000006388">
    <property type="component" value="Chromosome"/>
</dbReference>
<dbReference type="GO" id="GO:0005829">
    <property type="term" value="C:cytosol"/>
    <property type="evidence" value="ECO:0007669"/>
    <property type="project" value="TreeGrafter"/>
</dbReference>
<dbReference type="GO" id="GO:0047952">
    <property type="term" value="F:glycerol-3-phosphate dehydrogenase [NAD(P)+] activity"/>
    <property type="evidence" value="ECO:0007669"/>
    <property type="project" value="UniProtKB-UniRule"/>
</dbReference>
<dbReference type="GO" id="GO:0051287">
    <property type="term" value="F:NAD binding"/>
    <property type="evidence" value="ECO:0007669"/>
    <property type="project" value="InterPro"/>
</dbReference>
<dbReference type="GO" id="GO:0005975">
    <property type="term" value="P:carbohydrate metabolic process"/>
    <property type="evidence" value="ECO:0007669"/>
    <property type="project" value="InterPro"/>
</dbReference>
<dbReference type="GO" id="GO:0046167">
    <property type="term" value="P:glycerol-3-phosphate biosynthetic process"/>
    <property type="evidence" value="ECO:0007669"/>
    <property type="project" value="UniProtKB-UniRule"/>
</dbReference>
<dbReference type="GO" id="GO:0046168">
    <property type="term" value="P:glycerol-3-phosphate catabolic process"/>
    <property type="evidence" value="ECO:0007669"/>
    <property type="project" value="InterPro"/>
</dbReference>
<dbReference type="GO" id="GO:0006650">
    <property type="term" value="P:glycerophospholipid metabolic process"/>
    <property type="evidence" value="ECO:0007669"/>
    <property type="project" value="UniProtKB-UniRule"/>
</dbReference>
<dbReference type="GO" id="GO:0008654">
    <property type="term" value="P:phospholipid biosynthetic process"/>
    <property type="evidence" value="ECO:0007669"/>
    <property type="project" value="UniProtKB-KW"/>
</dbReference>
<dbReference type="FunFam" id="1.10.1040.10:FF:000001">
    <property type="entry name" value="Glycerol-3-phosphate dehydrogenase [NAD(P)+]"/>
    <property type="match status" value="1"/>
</dbReference>
<dbReference type="FunFam" id="3.40.50.720:FF:000019">
    <property type="entry name" value="Glycerol-3-phosphate dehydrogenase [NAD(P)+]"/>
    <property type="match status" value="1"/>
</dbReference>
<dbReference type="Gene3D" id="1.10.1040.10">
    <property type="entry name" value="N-(1-d-carboxylethyl)-l-norvaline Dehydrogenase, domain 2"/>
    <property type="match status" value="1"/>
</dbReference>
<dbReference type="Gene3D" id="3.40.50.720">
    <property type="entry name" value="NAD(P)-binding Rossmann-like Domain"/>
    <property type="match status" value="1"/>
</dbReference>
<dbReference type="HAMAP" id="MF_00394">
    <property type="entry name" value="NAD_Glyc3P_dehydrog"/>
    <property type="match status" value="1"/>
</dbReference>
<dbReference type="InterPro" id="IPR008927">
    <property type="entry name" value="6-PGluconate_DH-like_C_sf"/>
</dbReference>
<dbReference type="InterPro" id="IPR013328">
    <property type="entry name" value="6PGD_dom2"/>
</dbReference>
<dbReference type="InterPro" id="IPR006168">
    <property type="entry name" value="G3P_DH_NAD-dep"/>
</dbReference>
<dbReference type="InterPro" id="IPR006109">
    <property type="entry name" value="G3P_DH_NAD-dep_C"/>
</dbReference>
<dbReference type="InterPro" id="IPR011128">
    <property type="entry name" value="G3P_DH_NAD-dep_N"/>
</dbReference>
<dbReference type="InterPro" id="IPR036291">
    <property type="entry name" value="NAD(P)-bd_dom_sf"/>
</dbReference>
<dbReference type="NCBIfam" id="NF000940">
    <property type="entry name" value="PRK00094.1-2"/>
    <property type="match status" value="1"/>
</dbReference>
<dbReference type="NCBIfam" id="NF000942">
    <property type="entry name" value="PRK00094.1-4"/>
    <property type="match status" value="1"/>
</dbReference>
<dbReference type="PANTHER" id="PTHR11728">
    <property type="entry name" value="GLYCEROL-3-PHOSPHATE DEHYDROGENASE"/>
    <property type="match status" value="1"/>
</dbReference>
<dbReference type="PANTHER" id="PTHR11728:SF1">
    <property type="entry name" value="GLYCEROL-3-PHOSPHATE DEHYDROGENASE [NAD(+)] 2, CHLOROPLASTIC"/>
    <property type="match status" value="1"/>
</dbReference>
<dbReference type="Pfam" id="PF07479">
    <property type="entry name" value="NAD_Gly3P_dh_C"/>
    <property type="match status" value="1"/>
</dbReference>
<dbReference type="Pfam" id="PF01210">
    <property type="entry name" value="NAD_Gly3P_dh_N"/>
    <property type="match status" value="1"/>
</dbReference>
<dbReference type="PIRSF" id="PIRSF000114">
    <property type="entry name" value="Glycerol-3-P_dh"/>
    <property type="match status" value="1"/>
</dbReference>
<dbReference type="PRINTS" id="PR00077">
    <property type="entry name" value="GPDHDRGNASE"/>
</dbReference>
<dbReference type="SUPFAM" id="SSF48179">
    <property type="entry name" value="6-phosphogluconate dehydrogenase C-terminal domain-like"/>
    <property type="match status" value="1"/>
</dbReference>
<dbReference type="SUPFAM" id="SSF51735">
    <property type="entry name" value="NAD(P)-binding Rossmann-fold domains"/>
    <property type="match status" value="1"/>
</dbReference>
<dbReference type="PROSITE" id="PS00957">
    <property type="entry name" value="NAD_G3PDH"/>
    <property type="match status" value="1"/>
</dbReference>
<reference key="1">
    <citation type="journal article" date="2007" name="PLoS Genet.">
        <title>Genome analysis of Minibacterium massiliensis highlights the convergent evolution of water-living bacteria.</title>
        <authorList>
            <person name="Audic S."/>
            <person name="Robert C."/>
            <person name="Campagna B."/>
            <person name="Parinello H."/>
            <person name="Claverie J.-M."/>
            <person name="Raoult D."/>
            <person name="Drancourt M."/>
        </authorList>
    </citation>
    <scope>NUCLEOTIDE SEQUENCE [LARGE SCALE GENOMIC DNA]</scope>
    <source>
        <strain>Marseille</strain>
    </source>
</reference>
<sequence length="331" mass="34653">MNISILGAGAWGTALAMSLAERHAVMLWGRDAAVMQAAQQARENAVYLPGFRFPDKLLLSSELGAAITHAGSDGLLIVATSLAGLRPLAMQLKPYAIPNLVWLCKGFEEQTNLLPHQIVHEILGDAIPAGALSGPSFAQEVARGLPCALAIASDSEALRERVVHAVHGPAIRIYSTDDLIGVEVGGAVKNILAIATGIIDGLGLGLNARAALITRGLSEITRLGVALGGRAETFNGLAGMGDLILTCTGDLSRNRKVGLGLAQGKKLEQIVVELGHVAEGVRCAQAVRQLANQHGVDMPITNAVAAVLFDGESPRDTVKRLLSRESRDEIA</sequence>
<name>GPDA_JANMA</name>
<accession>A6T310</accession>